<accession>P03881</accession>
<accession>A0A0A7P395</accession>
<accession>Q9ZZW0</accession>
<reference key="1">
    <citation type="journal article" date="1981" name="J. Biol. Chem.">
        <title>Assembly of the mitochondrial membrane system. Analysis of the nucleotide sequence and transcripts in the oxi1 region of yeast mitochondrial DNA.</title>
        <authorList>
            <person name="Coruzzi G."/>
            <person name="Bonitz S.G."/>
            <person name="Thalenfeld B.E."/>
            <person name="Tzagoloff A."/>
        </authorList>
    </citation>
    <scope>NUCLEOTIDE SEQUENCE [GENOMIC DNA]</scope>
    <source>
        <strain>D273-10B/A21</strain>
    </source>
</reference>
<reference key="2">
    <citation type="journal article" date="1986" name="Gene">
        <title>The primary structure of the mitochondrial genome of Saccharomyces cerevisiae -- a review.</title>
        <authorList>
            <person name="de Zamaroczy M."/>
            <person name="Bernardi G."/>
        </authorList>
    </citation>
    <scope>NUCLEOTIDE SEQUENCE [GENOMIC DNA]</scope>
</reference>
<reference key="3">
    <citation type="journal article" date="1998" name="FEBS Lett.">
        <title>The complete sequence of the mitochondrial genome of Saccharomyces cerevisiae.</title>
        <authorList>
            <person name="Foury F."/>
            <person name="Roganti T."/>
            <person name="Lecrenier N."/>
            <person name="Purnelle B."/>
        </authorList>
    </citation>
    <scope>NUCLEOTIDE SEQUENCE [LARGE SCALE GENOMIC DNA]</scope>
    <source>
        <strain>ATCC 96604 / S288c / FY1679</strain>
    </source>
</reference>
<reference key="4">
    <citation type="journal article" date="2014" name="G3 (Bethesda)">
        <title>The reference genome sequence of Saccharomyces cerevisiae: Then and now.</title>
        <authorList>
            <person name="Engel S.R."/>
            <person name="Dietrich F.S."/>
            <person name="Fisk D.G."/>
            <person name="Binkley G."/>
            <person name="Balakrishnan R."/>
            <person name="Costanzo M.C."/>
            <person name="Dwight S.S."/>
            <person name="Hitz B.C."/>
            <person name="Karra K."/>
            <person name="Nash R.S."/>
            <person name="Weng S."/>
            <person name="Wong E.D."/>
            <person name="Lloyd P."/>
            <person name="Skrzypek M.S."/>
            <person name="Miyasato S.R."/>
            <person name="Simison M."/>
            <person name="Cherry J.M."/>
        </authorList>
    </citation>
    <scope>GENOME REANNOTATION</scope>
    <source>
        <strain>ATCC 96604 / S288c / FY1679</strain>
    </source>
</reference>
<comment type="subcellular location">
    <subcellularLocation>
        <location evidence="1">Mitochondrion</location>
    </subcellularLocation>
</comment>
<comment type="sequence caution" evidence="1">
    <conflict type="erroneous gene model prediction">
        <sequence resource="EMBL-CDS" id="AAA67529"/>
    </conflict>
</comment>
<name>YMRF1_YEAST</name>
<dbReference type="EMBL" id="J01485">
    <property type="status" value="NOT_ANNOTATED_CDS"/>
    <property type="molecule type" value="Genomic_DNA"/>
</dbReference>
<dbReference type="EMBL" id="L36888">
    <property type="protein sequence ID" value="AAA67529.1"/>
    <property type="status" value="ALT_SEQ"/>
    <property type="molecule type" value="Genomic_DNA"/>
</dbReference>
<dbReference type="EMBL" id="KP263414">
    <property type="protein sequence ID" value="AIZ98898.1"/>
    <property type="molecule type" value="Genomic_DNA"/>
</dbReference>
<dbReference type="PIR" id="A04514">
    <property type="entry name" value="QQBY3M"/>
</dbReference>
<dbReference type="PIR" id="S72682">
    <property type="entry name" value="S72682"/>
</dbReference>
<dbReference type="PIR" id="S78684">
    <property type="entry name" value="S78684"/>
</dbReference>
<dbReference type="RefSeq" id="NP_009327.1">
    <property type="nucleotide sequence ID" value="NC_001224.1"/>
</dbReference>
<dbReference type="SMR" id="P03881"/>
<dbReference type="BioGRID" id="34813">
    <property type="interactions" value="3"/>
</dbReference>
<dbReference type="FunCoup" id="P03881">
    <property type="interactions" value="12"/>
</dbReference>
<dbReference type="STRING" id="4932.Q0255"/>
<dbReference type="PaxDb" id="4932-Q0255"/>
<dbReference type="PeptideAtlas" id="P03881"/>
<dbReference type="EnsemblFungi" id="Q0255_mRNA">
    <property type="protein sequence ID" value="Q0255"/>
    <property type="gene ID" value="Q0255"/>
</dbReference>
<dbReference type="GeneID" id="854623"/>
<dbReference type="KEGG" id="sce:Q0255"/>
<dbReference type="AGR" id="SGD:S000007282"/>
<dbReference type="SGD" id="S000007282">
    <property type="gene designation" value="Q0255"/>
</dbReference>
<dbReference type="VEuPathDB" id="FungiDB:Q0255"/>
<dbReference type="eggNOG" id="ENOG502S2UT">
    <property type="taxonomic scope" value="Eukaryota"/>
</dbReference>
<dbReference type="HOGENOM" id="CLU_578975_0_0_1"/>
<dbReference type="InParanoid" id="P03881"/>
<dbReference type="OrthoDB" id="5412286at2759"/>
<dbReference type="BioCyc" id="YEAST:G3O-34386-MONOMER"/>
<dbReference type="BioGRID-ORCS" id="854623">
    <property type="hits" value="0 hits in 10 CRISPR screens"/>
</dbReference>
<dbReference type="PRO" id="PR:P03881"/>
<dbReference type="Proteomes" id="UP000002311">
    <property type="component" value="Mitochondrion"/>
</dbReference>
<dbReference type="RNAct" id="P03881">
    <property type="molecule type" value="protein"/>
</dbReference>
<dbReference type="GO" id="GO:0005739">
    <property type="term" value="C:mitochondrion"/>
    <property type="evidence" value="ECO:0000304"/>
    <property type="project" value="SGD"/>
</dbReference>
<dbReference type="GO" id="GO:0004519">
    <property type="term" value="F:endonuclease activity"/>
    <property type="evidence" value="ECO:0007669"/>
    <property type="project" value="InterPro"/>
</dbReference>
<dbReference type="Gene3D" id="3.10.28.10">
    <property type="entry name" value="Homing endonucleases"/>
    <property type="match status" value="2"/>
</dbReference>
<dbReference type="InterPro" id="IPR027434">
    <property type="entry name" value="Homing_endonucl"/>
</dbReference>
<dbReference type="InterPro" id="IPR003647">
    <property type="entry name" value="Intron_nuc_1_rpt"/>
</dbReference>
<dbReference type="InterPro" id="IPR004860">
    <property type="entry name" value="LAGLIDADG_dom"/>
</dbReference>
<dbReference type="InterPro" id="IPR051289">
    <property type="entry name" value="LAGLIDADG_Endonuclease"/>
</dbReference>
<dbReference type="InterPro" id="IPR010896">
    <property type="entry name" value="NUMOD1"/>
</dbReference>
<dbReference type="PANTHER" id="PTHR36181">
    <property type="entry name" value="INTRON-ENCODED ENDONUCLEASE AI3-RELATED"/>
    <property type="match status" value="1"/>
</dbReference>
<dbReference type="PANTHER" id="PTHR36181:SF2">
    <property type="entry name" value="INTRON-ENCODED ENDONUCLEASE AI3-RELATED"/>
    <property type="match status" value="1"/>
</dbReference>
<dbReference type="Pfam" id="PF00961">
    <property type="entry name" value="LAGLIDADG_1"/>
    <property type="match status" value="1"/>
</dbReference>
<dbReference type="Pfam" id="PF07453">
    <property type="entry name" value="NUMOD1"/>
    <property type="match status" value="1"/>
</dbReference>
<dbReference type="SMART" id="SM00497">
    <property type="entry name" value="IENR1"/>
    <property type="match status" value="1"/>
</dbReference>
<dbReference type="SUPFAM" id="SSF55608">
    <property type="entry name" value="Homing endonucleases"/>
    <property type="match status" value="2"/>
</dbReference>
<feature type="chain" id="PRO_0000196879" description="Uncharacterized mitochondrial protein RF1">
    <location>
        <begin position="1"/>
        <end position="472"/>
    </location>
</feature>
<gene>
    <name type="ordered locus">Q0255</name>
</gene>
<sequence length="472" mass="56413">MIKWTMINIYLLLMFLIIKNNNNNNNYNNITKYNKDMDLYSIQSPYIKNMNIIKRGYHTSLNNKLIIVQKDNKNNNKNNLEMDNFYKWLVGFTDGDGSFYIKLNDKKYLRFFYGFRMHIDDKACLEKIRNMLNMPSNFEETTKTIMLVNSQKKWLYSNIVTIFDKYPCLTIKYYSYYKWKMAMINNLNGMSYNNKDLLNIKNTINNYEVMPNLKIPYDKMNDYWILGFIEAEGSFDTSPKRNICGFNVSQHKRSINTLKAIKSYVLNNWKPIDNTPLLIKNKLLKDWDSSIKLTKPDKNGVIKLEFNRMDFLYYVILPKLYSLKWYSRKEIDFQLWKTTMEIYMKGLHNTTKGSNLLKLINNNINKKRYYSNYNISKNIIDDVLNMNTIYNYKLPYRMNSDIQRLNSMNNNNTKFINVGVFVYDLNNTLIMTFTGYRPAATYFNCSKHEIAKYIKNGNVFMNKYILKNILLD</sequence>
<evidence type="ECO:0000305" key="1"/>
<proteinExistence type="predicted"/>
<protein>
    <recommendedName>
        <fullName>Uncharacterized mitochondrial protein RF1</fullName>
    </recommendedName>
</protein>
<keyword id="KW-0496">Mitochondrion</keyword>
<keyword id="KW-1185">Reference proteome</keyword>
<geneLocation type="mitochondrion"/>
<organism>
    <name type="scientific">Saccharomyces cerevisiae (strain ATCC 204508 / S288c)</name>
    <name type="common">Baker's yeast</name>
    <dbReference type="NCBI Taxonomy" id="559292"/>
    <lineage>
        <taxon>Eukaryota</taxon>
        <taxon>Fungi</taxon>
        <taxon>Dikarya</taxon>
        <taxon>Ascomycota</taxon>
        <taxon>Saccharomycotina</taxon>
        <taxon>Saccharomycetes</taxon>
        <taxon>Saccharomycetales</taxon>
        <taxon>Saccharomycetaceae</taxon>
        <taxon>Saccharomyces</taxon>
    </lineage>
</organism>